<reference key="1">
    <citation type="journal article" date="2005" name="Nucleic Acids Res.">
        <title>Genome dynamics and diversity of Shigella species, the etiologic agents of bacillary dysentery.</title>
        <authorList>
            <person name="Yang F."/>
            <person name="Yang J."/>
            <person name="Zhang X."/>
            <person name="Chen L."/>
            <person name="Jiang Y."/>
            <person name="Yan Y."/>
            <person name="Tang X."/>
            <person name="Wang J."/>
            <person name="Xiong Z."/>
            <person name="Dong J."/>
            <person name="Xue Y."/>
            <person name="Zhu Y."/>
            <person name="Xu X."/>
            <person name="Sun L."/>
            <person name="Chen S."/>
            <person name="Nie H."/>
            <person name="Peng J."/>
            <person name="Xu J."/>
            <person name="Wang Y."/>
            <person name="Yuan Z."/>
            <person name="Wen Y."/>
            <person name="Yao Z."/>
            <person name="Shen Y."/>
            <person name="Qiang B."/>
            <person name="Hou Y."/>
            <person name="Yu J."/>
            <person name="Jin Q."/>
        </authorList>
    </citation>
    <scope>NUCLEOTIDE SEQUENCE [LARGE SCALE GENOMIC DNA]</scope>
    <source>
        <strain>Ss046</strain>
    </source>
</reference>
<keyword id="KW-1185">Reference proteome</keyword>
<dbReference type="EMBL" id="CP000038">
    <property type="protein sequence ID" value="AAZ88877.1"/>
    <property type="status" value="ALT_INIT"/>
    <property type="molecule type" value="Genomic_DNA"/>
</dbReference>
<dbReference type="RefSeq" id="WP_001136827.1">
    <property type="nucleotide sequence ID" value="NC_007384.1"/>
</dbReference>
<dbReference type="SMR" id="Q3Z035"/>
<dbReference type="GeneID" id="93775010"/>
<dbReference type="KEGG" id="ssn:SSON_2227"/>
<dbReference type="HOGENOM" id="CLU_074944_2_0_6"/>
<dbReference type="Proteomes" id="UP000002529">
    <property type="component" value="Chromosome"/>
</dbReference>
<dbReference type="GO" id="GO:0005829">
    <property type="term" value="C:cytosol"/>
    <property type="evidence" value="ECO:0007669"/>
    <property type="project" value="UniProtKB-ARBA"/>
</dbReference>
<dbReference type="GO" id="GO:0003746">
    <property type="term" value="F:translation elongation factor activity"/>
    <property type="evidence" value="ECO:0007669"/>
    <property type="project" value="UniProtKB-UniRule"/>
</dbReference>
<dbReference type="GO" id="GO:0043043">
    <property type="term" value="P:peptide biosynthetic process"/>
    <property type="evidence" value="ECO:0007669"/>
    <property type="project" value="InterPro"/>
</dbReference>
<dbReference type="CDD" id="cd04470">
    <property type="entry name" value="S1_EF-P_repeat_1"/>
    <property type="match status" value="1"/>
</dbReference>
<dbReference type="CDD" id="cd05794">
    <property type="entry name" value="S1_EF-P_repeat_2"/>
    <property type="match status" value="1"/>
</dbReference>
<dbReference type="FunFam" id="2.40.50.140:FF:000004">
    <property type="entry name" value="Elongation factor P"/>
    <property type="match status" value="1"/>
</dbReference>
<dbReference type="FunFam" id="2.30.30.30:FF:000011">
    <property type="entry name" value="Elongation factor P-like protein"/>
    <property type="match status" value="1"/>
</dbReference>
<dbReference type="FunFam" id="2.40.50.140:FF:000053">
    <property type="entry name" value="Elongation factor P-like protein"/>
    <property type="match status" value="1"/>
</dbReference>
<dbReference type="Gene3D" id="2.30.30.30">
    <property type="match status" value="1"/>
</dbReference>
<dbReference type="Gene3D" id="2.40.50.140">
    <property type="entry name" value="Nucleic acid-binding proteins"/>
    <property type="match status" value="2"/>
</dbReference>
<dbReference type="HAMAP" id="MF_00646">
    <property type="entry name" value="EFP"/>
    <property type="match status" value="1"/>
</dbReference>
<dbReference type="InterPro" id="IPR015365">
    <property type="entry name" value="Elong-fact-P_C"/>
</dbReference>
<dbReference type="InterPro" id="IPR012340">
    <property type="entry name" value="NA-bd_OB-fold"/>
</dbReference>
<dbReference type="InterPro" id="IPR014722">
    <property type="entry name" value="Rib_uL2_dom2"/>
</dbReference>
<dbReference type="InterPro" id="IPR020599">
    <property type="entry name" value="Transl_elong_fac_P/YeiP"/>
</dbReference>
<dbReference type="InterPro" id="IPR013185">
    <property type="entry name" value="Transl_elong_KOW-like"/>
</dbReference>
<dbReference type="InterPro" id="IPR011897">
    <property type="entry name" value="Transl_elong_p-like_YeiP"/>
</dbReference>
<dbReference type="InterPro" id="IPR001059">
    <property type="entry name" value="Transl_elong_P/YeiP_cen"/>
</dbReference>
<dbReference type="InterPro" id="IPR013852">
    <property type="entry name" value="Transl_elong_P/YeiP_CS"/>
</dbReference>
<dbReference type="InterPro" id="IPR008991">
    <property type="entry name" value="Translation_prot_SH3-like_sf"/>
</dbReference>
<dbReference type="NCBIfam" id="NF001810">
    <property type="entry name" value="PRK00529.1"/>
    <property type="match status" value="1"/>
</dbReference>
<dbReference type="NCBIfam" id="NF003392">
    <property type="entry name" value="PRK04542.1"/>
    <property type="match status" value="1"/>
</dbReference>
<dbReference type="NCBIfam" id="TIGR02178">
    <property type="entry name" value="yeiP"/>
    <property type="match status" value="1"/>
</dbReference>
<dbReference type="PANTHER" id="PTHR30053">
    <property type="entry name" value="ELONGATION FACTOR P"/>
    <property type="match status" value="1"/>
</dbReference>
<dbReference type="PANTHER" id="PTHR30053:SF14">
    <property type="entry name" value="TRANSLATION ELONGATION FACTOR KOW-LIKE DOMAIN-CONTAINING PROTEIN"/>
    <property type="match status" value="1"/>
</dbReference>
<dbReference type="Pfam" id="PF01132">
    <property type="entry name" value="EFP"/>
    <property type="match status" value="1"/>
</dbReference>
<dbReference type="Pfam" id="PF08207">
    <property type="entry name" value="EFP_N"/>
    <property type="match status" value="1"/>
</dbReference>
<dbReference type="Pfam" id="PF09285">
    <property type="entry name" value="Elong-fact-P_C"/>
    <property type="match status" value="1"/>
</dbReference>
<dbReference type="PIRSF" id="PIRSF005901">
    <property type="entry name" value="EF-P"/>
    <property type="match status" value="1"/>
</dbReference>
<dbReference type="SMART" id="SM01185">
    <property type="entry name" value="EFP"/>
    <property type="match status" value="1"/>
</dbReference>
<dbReference type="SMART" id="SM00841">
    <property type="entry name" value="Elong-fact-P_C"/>
    <property type="match status" value="1"/>
</dbReference>
<dbReference type="SUPFAM" id="SSF50249">
    <property type="entry name" value="Nucleic acid-binding proteins"/>
    <property type="match status" value="2"/>
</dbReference>
<dbReference type="SUPFAM" id="SSF50104">
    <property type="entry name" value="Translation proteins SH3-like domain"/>
    <property type="match status" value="1"/>
</dbReference>
<dbReference type="PROSITE" id="PS01275">
    <property type="entry name" value="EFP"/>
    <property type="match status" value="1"/>
</dbReference>
<feature type="chain" id="PRO_0000259902" description="Elongation factor P-like protein">
    <location>
        <begin position="1"/>
        <end position="190"/>
    </location>
</feature>
<gene>
    <name evidence="1" type="primary">yeiP</name>
    <name type="ordered locus">SSON_2227</name>
</gene>
<name>EFPL_SHISS</name>
<sequence length="190" mass="21533">MPRANEIKKGMVLNYNGKLLLVKDIDIQSPTARGAATLYKMRFSDVRTGLKVEERFKGDDIVDTVTLTRRYVDFSYVDGNEYVFMDKEDYTPYTFTKDQIEEELLFMPEGGMPDMQVLTWDGQLLALELPQTVDLEIVETAPGIKGASASARNKPATLSTGLVIQVPEYLSPGEKIRIHIEERRYMGRAD</sequence>
<protein>
    <recommendedName>
        <fullName evidence="1">Elongation factor P-like protein</fullName>
    </recommendedName>
</protein>
<evidence type="ECO:0000255" key="1">
    <source>
        <dbReference type="HAMAP-Rule" id="MF_00646"/>
    </source>
</evidence>
<evidence type="ECO:0000305" key="2"/>
<comment type="similarity">
    <text evidence="1">Belongs to the elongation factor P family.</text>
</comment>
<comment type="sequence caution" evidence="2">
    <conflict type="erroneous initiation">
        <sequence resource="EMBL-CDS" id="AAZ88877"/>
    </conflict>
</comment>
<proteinExistence type="inferred from homology"/>
<accession>Q3Z035</accession>
<organism>
    <name type="scientific">Shigella sonnei (strain Ss046)</name>
    <dbReference type="NCBI Taxonomy" id="300269"/>
    <lineage>
        <taxon>Bacteria</taxon>
        <taxon>Pseudomonadati</taxon>
        <taxon>Pseudomonadota</taxon>
        <taxon>Gammaproteobacteria</taxon>
        <taxon>Enterobacterales</taxon>
        <taxon>Enterobacteriaceae</taxon>
        <taxon>Shigella</taxon>
    </lineage>
</organism>